<feature type="peptide" id="PRO_0000366096" description="Tachykinin-like peptide-II">
    <location>
        <begin position="1"/>
        <end position="17"/>
    </location>
</feature>
<feature type="modified residue" description="Methionine amide" evidence="1">
    <location>
        <position position="17"/>
    </location>
</feature>
<reference key="1">
    <citation type="journal article" date="2009" name="Toxicon">
        <title>Characterization of the mechanisms underlying the inflammatory response to Polistes lanio lanio (paper wasp) venom in mouse dorsal skin.</title>
        <authorList>
            <person name="Yshii L.M."/>
            <person name="Souza G.H.M.F."/>
            <person name="Camargo E.A."/>
            <person name="Eberlin M.N."/>
            <person name="Ribela M.T.C.P."/>
            <person name="Muscara M.N."/>
            <person name="Hyslop S."/>
            <person name="Costa S.K.P."/>
        </authorList>
    </citation>
    <scope>PROTEIN SEQUENCE</scope>
    <scope>MASS SPECTROMETRY</scope>
    <scope>AMIDATION AT MET-17</scope>
    <source>
        <strain>Subsp. lanio</strain>
        <tissue>Venom</tissue>
    </source>
</reference>
<organism>
    <name type="scientific">Polistes lanio</name>
    <name type="common">Wasp</name>
    <dbReference type="NCBI Taxonomy" id="91419"/>
    <lineage>
        <taxon>Eukaryota</taxon>
        <taxon>Metazoa</taxon>
        <taxon>Ecdysozoa</taxon>
        <taxon>Arthropoda</taxon>
        <taxon>Hexapoda</taxon>
        <taxon>Insecta</taxon>
        <taxon>Pterygota</taxon>
        <taxon>Neoptera</taxon>
        <taxon>Endopterygota</taxon>
        <taxon>Hymenoptera</taxon>
        <taxon>Apocrita</taxon>
        <taxon>Aculeata</taxon>
        <taxon>Vespoidea</taxon>
        <taxon>Vespidae</taxon>
        <taxon>Polistinae</taxon>
        <taxon>Polistini</taxon>
        <taxon>Polistes</taxon>
    </lineage>
</organism>
<proteinExistence type="evidence at protein level"/>
<evidence type="ECO:0000269" key="1">
    <source>
    </source>
</evidence>
<sequence>ASEPTALGLPRIFPGLM</sequence>
<name>TLP2_POLLN</name>
<comment type="subcellular location">
    <subcellularLocation>
        <location>Secreted</location>
    </subcellularLocation>
</comment>
<comment type="tissue specificity">
    <text>Expressed by the venom gland.</text>
</comment>
<comment type="mass spectrometry"/>
<keyword id="KW-0027">Amidation</keyword>
<keyword id="KW-0903">Direct protein sequencing</keyword>
<keyword id="KW-0964">Secreted</keyword>
<accession>P85880</accession>
<protein>
    <recommendedName>
        <fullName>Tachykinin-like peptide-II</fullName>
        <shortName>PllTkP-II</shortName>
    </recommendedName>
</protein>
<dbReference type="GO" id="GO:0005576">
    <property type="term" value="C:extracellular region"/>
    <property type="evidence" value="ECO:0007669"/>
    <property type="project" value="UniProtKB-SubCell"/>
</dbReference>